<keyword id="KW-0496">Mitochondrion</keyword>
<keyword id="KW-1185">Reference proteome</keyword>
<keyword id="KW-0687">Ribonucleoprotein</keyword>
<keyword id="KW-0689">Ribosomal protein</keyword>
<keyword id="KW-0809">Transit peptide</keyword>
<comment type="subunit">
    <text evidence="1">Component of the mitochondrial ribosome small subunit (28S) which comprises a 12S rRNA and about 30 distinct proteins.</text>
</comment>
<comment type="subcellular location">
    <subcellularLocation>
        <location evidence="1">Mitochondrion</location>
    </subcellularLocation>
</comment>
<comment type="similarity">
    <text evidence="3">Belongs to the universal ribosomal protein uS3 family.</text>
</comment>
<proteinExistence type="inferred from homology"/>
<evidence type="ECO:0000250" key="1">
    <source>
        <dbReference type="UniProtKB" id="Q2M2T7"/>
    </source>
</evidence>
<evidence type="ECO:0000255" key="2"/>
<evidence type="ECO:0000305" key="3"/>
<gene>
    <name type="primary">mRpS24</name>
    <name type="ORF">CG13608</name>
</gene>
<sequence>MNFLKKLLPQVATEVQQLSRSGFHTSSVCCRVQSGRYRITTKRNRPLTYEMANPPHFIGHRKSWNSWNTSTMKDALRPSQTAIEDVFIRKFVTGTWHALVCSEVIIKRQHNTIRIAALIRQAITPRKMYFLIGYTEELLSYWMQCPVTLELQTVGDKKDVVFKYI</sequence>
<dbReference type="EMBL" id="AE014297">
    <property type="protein sequence ID" value="AAF56248.1"/>
    <property type="molecule type" value="Genomic_DNA"/>
</dbReference>
<dbReference type="RefSeq" id="NP_524476.1">
    <property type="nucleotide sequence ID" value="NM_079752.3"/>
</dbReference>
<dbReference type="SMR" id="Q9VCC3"/>
<dbReference type="BioGRID" id="67802">
    <property type="interactions" value="3"/>
</dbReference>
<dbReference type="FunCoup" id="Q9VCC3">
    <property type="interactions" value="200"/>
</dbReference>
<dbReference type="IntAct" id="Q9VCC3">
    <property type="interactions" value="23"/>
</dbReference>
<dbReference type="STRING" id="7227.FBpp0083962"/>
<dbReference type="GlyGen" id="Q9VCC3">
    <property type="glycosylation" value="1 site"/>
</dbReference>
<dbReference type="PaxDb" id="7227-FBpp0083962"/>
<dbReference type="DNASU" id="42870"/>
<dbReference type="EnsemblMetazoa" id="FBtr0084577">
    <property type="protein sequence ID" value="FBpp0083962"/>
    <property type="gene ID" value="FBgn0039159"/>
</dbReference>
<dbReference type="GeneID" id="42870"/>
<dbReference type="KEGG" id="dme:Dmel_CG13608"/>
<dbReference type="AGR" id="FB:FBgn0039159"/>
<dbReference type="CTD" id="64951"/>
<dbReference type="FlyBase" id="FBgn0039159">
    <property type="gene designation" value="mRpS24"/>
</dbReference>
<dbReference type="VEuPathDB" id="VectorBase:FBgn0039159"/>
<dbReference type="eggNOG" id="ENOG502RXU1">
    <property type="taxonomic scope" value="Eukaryota"/>
</dbReference>
<dbReference type="GeneTree" id="ENSGT00390000011179"/>
<dbReference type="HOGENOM" id="CLU_134150_1_0_1"/>
<dbReference type="InParanoid" id="Q9VCC3"/>
<dbReference type="OMA" id="FLQGYTE"/>
<dbReference type="OrthoDB" id="5950413at2759"/>
<dbReference type="PhylomeDB" id="Q9VCC3"/>
<dbReference type="Reactome" id="R-DME-5389840">
    <property type="pathway name" value="Mitochondrial translation elongation"/>
</dbReference>
<dbReference type="Reactome" id="R-DME-5419276">
    <property type="pathway name" value="Mitochondrial translation termination"/>
</dbReference>
<dbReference type="BioGRID-ORCS" id="42870">
    <property type="hits" value="1 hit in 1 CRISPR screen"/>
</dbReference>
<dbReference type="GenomeRNAi" id="42870"/>
<dbReference type="PRO" id="PR:Q9VCC3"/>
<dbReference type="Proteomes" id="UP000000803">
    <property type="component" value="Chromosome 3R"/>
</dbReference>
<dbReference type="Bgee" id="FBgn0039159">
    <property type="expression patterns" value="Expressed in adult Malpighian tubule (Drosophila) and 56 other cell types or tissues"/>
</dbReference>
<dbReference type="ExpressionAtlas" id="Q9VCC3">
    <property type="expression patterns" value="baseline and differential"/>
</dbReference>
<dbReference type="GO" id="GO:0005763">
    <property type="term" value="C:mitochondrial small ribosomal subunit"/>
    <property type="evidence" value="ECO:0000250"/>
    <property type="project" value="UniProtKB"/>
</dbReference>
<dbReference type="GO" id="GO:0003735">
    <property type="term" value="F:structural constituent of ribosome"/>
    <property type="evidence" value="ECO:0000250"/>
    <property type="project" value="UniProtKB"/>
</dbReference>
<dbReference type="GO" id="GO:0032543">
    <property type="term" value="P:mitochondrial translation"/>
    <property type="evidence" value="ECO:0000250"/>
    <property type="project" value="UniProtKB"/>
</dbReference>
<dbReference type="InterPro" id="IPR026146">
    <property type="entry name" value="Ribosomal_uS3m"/>
</dbReference>
<dbReference type="PANTHER" id="PTHR21244">
    <property type="entry name" value="MITOCHONDRIAL 28S RIBOSOMAL PROTEIN S24"/>
    <property type="match status" value="1"/>
</dbReference>
<dbReference type="PANTHER" id="PTHR21244:SF1">
    <property type="entry name" value="SMALL RIBOSOMAL SUBUNIT PROTEIN US3M"/>
    <property type="match status" value="1"/>
</dbReference>
<dbReference type="Pfam" id="PF14955">
    <property type="entry name" value="MRP-S24"/>
    <property type="match status" value="1"/>
</dbReference>
<protein>
    <recommendedName>
        <fullName evidence="3">Small ribosomal subunit protein uS3m</fullName>
    </recommendedName>
    <alternativeName>
        <fullName>28S ribosomal protein S24, mitochondrial</fullName>
        <shortName>MRP-S24</shortName>
        <shortName>S24mt</shortName>
    </alternativeName>
</protein>
<organism>
    <name type="scientific">Drosophila melanogaster</name>
    <name type="common">Fruit fly</name>
    <dbReference type="NCBI Taxonomy" id="7227"/>
    <lineage>
        <taxon>Eukaryota</taxon>
        <taxon>Metazoa</taxon>
        <taxon>Ecdysozoa</taxon>
        <taxon>Arthropoda</taxon>
        <taxon>Hexapoda</taxon>
        <taxon>Insecta</taxon>
        <taxon>Pterygota</taxon>
        <taxon>Neoptera</taxon>
        <taxon>Endopterygota</taxon>
        <taxon>Diptera</taxon>
        <taxon>Brachycera</taxon>
        <taxon>Muscomorpha</taxon>
        <taxon>Ephydroidea</taxon>
        <taxon>Drosophilidae</taxon>
        <taxon>Drosophila</taxon>
        <taxon>Sophophora</taxon>
    </lineage>
</organism>
<name>RT24_DROME</name>
<feature type="transit peptide" description="Mitochondrion" evidence="2">
    <location>
        <begin position="1"/>
        <end position="30"/>
    </location>
</feature>
<feature type="chain" id="PRO_0000273073" description="Small ribosomal subunit protein uS3m">
    <location>
        <begin position="31"/>
        <end position="165"/>
    </location>
</feature>
<accession>Q9VCC3</accession>
<reference key="1">
    <citation type="journal article" date="2000" name="Science">
        <title>The genome sequence of Drosophila melanogaster.</title>
        <authorList>
            <person name="Adams M.D."/>
            <person name="Celniker S.E."/>
            <person name="Holt R.A."/>
            <person name="Evans C.A."/>
            <person name="Gocayne J.D."/>
            <person name="Amanatides P.G."/>
            <person name="Scherer S.E."/>
            <person name="Li P.W."/>
            <person name="Hoskins R.A."/>
            <person name="Galle R.F."/>
            <person name="George R.A."/>
            <person name="Lewis S.E."/>
            <person name="Richards S."/>
            <person name="Ashburner M."/>
            <person name="Henderson S.N."/>
            <person name="Sutton G.G."/>
            <person name="Wortman J.R."/>
            <person name="Yandell M.D."/>
            <person name="Zhang Q."/>
            <person name="Chen L.X."/>
            <person name="Brandon R.C."/>
            <person name="Rogers Y.-H.C."/>
            <person name="Blazej R.G."/>
            <person name="Champe M."/>
            <person name="Pfeiffer B.D."/>
            <person name="Wan K.H."/>
            <person name="Doyle C."/>
            <person name="Baxter E.G."/>
            <person name="Helt G."/>
            <person name="Nelson C.R."/>
            <person name="Miklos G.L.G."/>
            <person name="Abril J.F."/>
            <person name="Agbayani A."/>
            <person name="An H.-J."/>
            <person name="Andrews-Pfannkoch C."/>
            <person name="Baldwin D."/>
            <person name="Ballew R.M."/>
            <person name="Basu A."/>
            <person name="Baxendale J."/>
            <person name="Bayraktaroglu L."/>
            <person name="Beasley E.M."/>
            <person name="Beeson K.Y."/>
            <person name="Benos P.V."/>
            <person name="Berman B.P."/>
            <person name="Bhandari D."/>
            <person name="Bolshakov S."/>
            <person name="Borkova D."/>
            <person name="Botchan M.R."/>
            <person name="Bouck J."/>
            <person name="Brokstein P."/>
            <person name="Brottier P."/>
            <person name="Burtis K.C."/>
            <person name="Busam D.A."/>
            <person name="Butler H."/>
            <person name="Cadieu E."/>
            <person name="Center A."/>
            <person name="Chandra I."/>
            <person name="Cherry J.M."/>
            <person name="Cawley S."/>
            <person name="Dahlke C."/>
            <person name="Davenport L.B."/>
            <person name="Davies P."/>
            <person name="de Pablos B."/>
            <person name="Delcher A."/>
            <person name="Deng Z."/>
            <person name="Mays A.D."/>
            <person name="Dew I."/>
            <person name="Dietz S.M."/>
            <person name="Dodson K."/>
            <person name="Doup L.E."/>
            <person name="Downes M."/>
            <person name="Dugan-Rocha S."/>
            <person name="Dunkov B.C."/>
            <person name="Dunn P."/>
            <person name="Durbin K.J."/>
            <person name="Evangelista C.C."/>
            <person name="Ferraz C."/>
            <person name="Ferriera S."/>
            <person name="Fleischmann W."/>
            <person name="Fosler C."/>
            <person name="Gabrielian A.E."/>
            <person name="Garg N.S."/>
            <person name="Gelbart W.M."/>
            <person name="Glasser K."/>
            <person name="Glodek A."/>
            <person name="Gong F."/>
            <person name="Gorrell J.H."/>
            <person name="Gu Z."/>
            <person name="Guan P."/>
            <person name="Harris M."/>
            <person name="Harris N.L."/>
            <person name="Harvey D.A."/>
            <person name="Heiman T.J."/>
            <person name="Hernandez J.R."/>
            <person name="Houck J."/>
            <person name="Hostin D."/>
            <person name="Houston K.A."/>
            <person name="Howland T.J."/>
            <person name="Wei M.-H."/>
            <person name="Ibegwam C."/>
            <person name="Jalali M."/>
            <person name="Kalush F."/>
            <person name="Karpen G.H."/>
            <person name="Ke Z."/>
            <person name="Kennison J.A."/>
            <person name="Ketchum K.A."/>
            <person name="Kimmel B.E."/>
            <person name="Kodira C.D."/>
            <person name="Kraft C.L."/>
            <person name="Kravitz S."/>
            <person name="Kulp D."/>
            <person name="Lai Z."/>
            <person name="Lasko P."/>
            <person name="Lei Y."/>
            <person name="Levitsky A.A."/>
            <person name="Li J.H."/>
            <person name="Li Z."/>
            <person name="Liang Y."/>
            <person name="Lin X."/>
            <person name="Liu X."/>
            <person name="Mattei B."/>
            <person name="McIntosh T.C."/>
            <person name="McLeod M.P."/>
            <person name="McPherson D."/>
            <person name="Merkulov G."/>
            <person name="Milshina N.V."/>
            <person name="Mobarry C."/>
            <person name="Morris J."/>
            <person name="Moshrefi A."/>
            <person name="Mount S.M."/>
            <person name="Moy M."/>
            <person name="Murphy B."/>
            <person name="Murphy L."/>
            <person name="Muzny D.M."/>
            <person name="Nelson D.L."/>
            <person name="Nelson D.R."/>
            <person name="Nelson K.A."/>
            <person name="Nixon K."/>
            <person name="Nusskern D.R."/>
            <person name="Pacleb J.M."/>
            <person name="Palazzolo M."/>
            <person name="Pittman G.S."/>
            <person name="Pan S."/>
            <person name="Pollard J."/>
            <person name="Puri V."/>
            <person name="Reese M.G."/>
            <person name="Reinert K."/>
            <person name="Remington K."/>
            <person name="Saunders R.D.C."/>
            <person name="Scheeler F."/>
            <person name="Shen H."/>
            <person name="Shue B.C."/>
            <person name="Siden-Kiamos I."/>
            <person name="Simpson M."/>
            <person name="Skupski M.P."/>
            <person name="Smith T.J."/>
            <person name="Spier E."/>
            <person name="Spradling A.C."/>
            <person name="Stapleton M."/>
            <person name="Strong R."/>
            <person name="Sun E."/>
            <person name="Svirskas R."/>
            <person name="Tector C."/>
            <person name="Turner R."/>
            <person name="Venter E."/>
            <person name="Wang A.H."/>
            <person name="Wang X."/>
            <person name="Wang Z.-Y."/>
            <person name="Wassarman D.A."/>
            <person name="Weinstock G.M."/>
            <person name="Weissenbach J."/>
            <person name="Williams S.M."/>
            <person name="Woodage T."/>
            <person name="Worley K.C."/>
            <person name="Wu D."/>
            <person name="Yang S."/>
            <person name="Yao Q.A."/>
            <person name="Ye J."/>
            <person name="Yeh R.-F."/>
            <person name="Zaveri J.S."/>
            <person name="Zhan M."/>
            <person name="Zhang G."/>
            <person name="Zhao Q."/>
            <person name="Zheng L."/>
            <person name="Zheng X.H."/>
            <person name="Zhong F.N."/>
            <person name="Zhong W."/>
            <person name="Zhou X."/>
            <person name="Zhu S.C."/>
            <person name="Zhu X."/>
            <person name="Smith H.O."/>
            <person name="Gibbs R.A."/>
            <person name="Myers E.W."/>
            <person name="Rubin G.M."/>
            <person name="Venter J.C."/>
        </authorList>
    </citation>
    <scope>NUCLEOTIDE SEQUENCE [LARGE SCALE GENOMIC DNA]</scope>
    <source>
        <strain>Berkeley</strain>
    </source>
</reference>
<reference key="2">
    <citation type="journal article" date="2002" name="Genome Biol.">
        <title>Annotation of the Drosophila melanogaster euchromatic genome: a systematic review.</title>
        <authorList>
            <person name="Misra S."/>
            <person name="Crosby M.A."/>
            <person name="Mungall C.J."/>
            <person name="Matthews B.B."/>
            <person name="Campbell K.S."/>
            <person name="Hradecky P."/>
            <person name="Huang Y."/>
            <person name="Kaminker J.S."/>
            <person name="Millburn G.H."/>
            <person name="Prochnik S.E."/>
            <person name="Smith C.D."/>
            <person name="Tupy J.L."/>
            <person name="Whitfield E.J."/>
            <person name="Bayraktaroglu L."/>
            <person name="Berman B.P."/>
            <person name="Bettencourt B.R."/>
            <person name="Celniker S.E."/>
            <person name="de Grey A.D.N.J."/>
            <person name="Drysdale R.A."/>
            <person name="Harris N.L."/>
            <person name="Richter J."/>
            <person name="Russo S."/>
            <person name="Schroeder A.J."/>
            <person name="Shu S.Q."/>
            <person name="Stapleton M."/>
            <person name="Yamada C."/>
            <person name="Ashburner M."/>
            <person name="Gelbart W.M."/>
            <person name="Rubin G.M."/>
            <person name="Lewis S.E."/>
        </authorList>
    </citation>
    <scope>GENOME REANNOTATION</scope>
    <source>
        <strain>Berkeley</strain>
    </source>
</reference>